<dbReference type="EC" id="3.4.24.-"/>
<dbReference type="EMBL" id="AY149647">
    <property type="protein sequence ID" value="AAN39540.1"/>
    <property type="molecule type" value="mRNA"/>
</dbReference>
<dbReference type="SMR" id="Q8AWI5"/>
<dbReference type="MEROPS" id="M12.315"/>
<dbReference type="GO" id="GO:0005576">
    <property type="term" value="C:extracellular region"/>
    <property type="evidence" value="ECO:0007669"/>
    <property type="project" value="UniProtKB-SubCell"/>
</dbReference>
<dbReference type="GO" id="GO:0005886">
    <property type="term" value="C:plasma membrane"/>
    <property type="evidence" value="ECO:0007669"/>
    <property type="project" value="TreeGrafter"/>
</dbReference>
<dbReference type="GO" id="GO:0046872">
    <property type="term" value="F:metal ion binding"/>
    <property type="evidence" value="ECO:0007669"/>
    <property type="project" value="UniProtKB-KW"/>
</dbReference>
<dbReference type="GO" id="GO:0004222">
    <property type="term" value="F:metalloendopeptidase activity"/>
    <property type="evidence" value="ECO:0007669"/>
    <property type="project" value="InterPro"/>
</dbReference>
<dbReference type="GO" id="GO:0090729">
    <property type="term" value="F:toxin activity"/>
    <property type="evidence" value="ECO:0007669"/>
    <property type="project" value="UniProtKB-KW"/>
</dbReference>
<dbReference type="GO" id="GO:0006915">
    <property type="term" value="P:apoptotic process"/>
    <property type="evidence" value="ECO:0007669"/>
    <property type="project" value="UniProtKB-KW"/>
</dbReference>
<dbReference type="GO" id="GO:0006508">
    <property type="term" value="P:proteolysis"/>
    <property type="evidence" value="ECO:0007669"/>
    <property type="project" value="UniProtKB-KW"/>
</dbReference>
<dbReference type="CDD" id="cd04269">
    <property type="entry name" value="ZnMc_adamalysin_II_like"/>
    <property type="match status" value="1"/>
</dbReference>
<dbReference type="FunFam" id="3.40.390.10:FF:000002">
    <property type="entry name" value="Disintegrin and metalloproteinase domain-containing protein 22"/>
    <property type="match status" value="1"/>
</dbReference>
<dbReference type="FunFam" id="4.10.70.10:FF:000001">
    <property type="entry name" value="Disintegrin and metalloproteinase domain-containing protein 22"/>
    <property type="match status" value="1"/>
</dbReference>
<dbReference type="Gene3D" id="3.40.390.10">
    <property type="entry name" value="Collagenase (Catalytic Domain)"/>
    <property type="match status" value="1"/>
</dbReference>
<dbReference type="Gene3D" id="4.10.70.10">
    <property type="entry name" value="Disintegrin domain"/>
    <property type="match status" value="1"/>
</dbReference>
<dbReference type="InterPro" id="IPR006586">
    <property type="entry name" value="ADAM_Cys-rich"/>
</dbReference>
<dbReference type="InterPro" id="IPR018358">
    <property type="entry name" value="Disintegrin_CS"/>
</dbReference>
<dbReference type="InterPro" id="IPR001762">
    <property type="entry name" value="Disintegrin_dom"/>
</dbReference>
<dbReference type="InterPro" id="IPR036436">
    <property type="entry name" value="Disintegrin_dom_sf"/>
</dbReference>
<dbReference type="InterPro" id="IPR024079">
    <property type="entry name" value="MetalloPept_cat_dom_sf"/>
</dbReference>
<dbReference type="InterPro" id="IPR001590">
    <property type="entry name" value="Peptidase_M12B"/>
</dbReference>
<dbReference type="InterPro" id="IPR002870">
    <property type="entry name" value="Peptidase_M12B_N"/>
</dbReference>
<dbReference type="InterPro" id="IPR034027">
    <property type="entry name" value="Reprolysin_adamalysin"/>
</dbReference>
<dbReference type="PANTHER" id="PTHR11905">
    <property type="entry name" value="ADAM A DISINTEGRIN AND METALLOPROTEASE DOMAIN"/>
    <property type="match status" value="1"/>
</dbReference>
<dbReference type="PANTHER" id="PTHR11905:SF32">
    <property type="entry name" value="DISINTEGRIN AND METALLOPROTEINASE DOMAIN-CONTAINING PROTEIN 28"/>
    <property type="match status" value="1"/>
</dbReference>
<dbReference type="Pfam" id="PF08516">
    <property type="entry name" value="ADAM_CR"/>
    <property type="match status" value="1"/>
</dbReference>
<dbReference type="Pfam" id="PF00200">
    <property type="entry name" value="Disintegrin"/>
    <property type="match status" value="1"/>
</dbReference>
<dbReference type="Pfam" id="PF01562">
    <property type="entry name" value="Pep_M12B_propep"/>
    <property type="match status" value="1"/>
</dbReference>
<dbReference type="Pfam" id="PF01421">
    <property type="entry name" value="Reprolysin"/>
    <property type="match status" value="1"/>
</dbReference>
<dbReference type="PRINTS" id="PR00289">
    <property type="entry name" value="DISINTEGRIN"/>
</dbReference>
<dbReference type="SMART" id="SM00608">
    <property type="entry name" value="ACR"/>
    <property type="match status" value="1"/>
</dbReference>
<dbReference type="SMART" id="SM00050">
    <property type="entry name" value="DISIN"/>
    <property type="match status" value="1"/>
</dbReference>
<dbReference type="SUPFAM" id="SSF57552">
    <property type="entry name" value="Blood coagulation inhibitor (disintegrin)"/>
    <property type="match status" value="1"/>
</dbReference>
<dbReference type="SUPFAM" id="SSF55486">
    <property type="entry name" value="Metalloproteases ('zincins'), catalytic domain"/>
    <property type="match status" value="1"/>
</dbReference>
<dbReference type="PROSITE" id="PS50215">
    <property type="entry name" value="ADAM_MEPRO"/>
    <property type="match status" value="1"/>
</dbReference>
<dbReference type="PROSITE" id="PS00427">
    <property type="entry name" value="DISINTEGRIN_1"/>
    <property type="match status" value="1"/>
</dbReference>
<dbReference type="PROSITE" id="PS50214">
    <property type="entry name" value="DISINTEGRIN_2"/>
    <property type="match status" value="1"/>
</dbReference>
<dbReference type="PROSITE" id="PS00142">
    <property type="entry name" value="ZINC_PROTEASE"/>
    <property type="match status" value="1"/>
</dbReference>
<proteinExistence type="evidence at protein level"/>
<protein>
    <recommendedName>
        <fullName>Zinc metalloproteinase-disintegrin-like halysase</fullName>
        <ecNumber>3.4.24.-</ecNumber>
    </recommendedName>
    <alternativeName>
        <fullName>Snake venom metalloproteinase</fullName>
        <shortName>SVMP</shortName>
    </alternativeName>
    <alternativeName>
        <fullName>Vascular apoptosis-inducing protein</fullName>
        <shortName>VAP</shortName>
    </alternativeName>
</protein>
<feature type="signal peptide" evidence="2">
    <location>
        <begin position="1"/>
        <end position="20"/>
    </location>
</feature>
<feature type="propeptide" id="PRO_0000329981" evidence="7">
    <location>
        <begin position="21"/>
        <end position="182"/>
    </location>
</feature>
<feature type="chain" id="PRO_0000329982" description="Zinc metalloproteinase-disintegrin-like halysase">
    <location>
        <begin position="183"/>
        <end position="610"/>
    </location>
</feature>
<feature type="domain" description="Peptidase M12B" evidence="4">
    <location>
        <begin position="199"/>
        <end position="395"/>
    </location>
</feature>
<feature type="domain" description="Disintegrin" evidence="3">
    <location>
        <begin position="403"/>
        <end position="488"/>
    </location>
</feature>
<feature type="short sequence motif" description="D/ECD-tripeptide">
    <location>
        <begin position="467"/>
        <end position="469"/>
    </location>
</feature>
<feature type="active site" evidence="4 5">
    <location>
        <position position="336"/>
    </location>
</feature>
<feature type="binding site" evidence="1">
    <location>
        <position position="335"/>
    </location>
    <ligand>
        <name>Zn(2+)</name>
        <dbReference type="ChEBI" id="CHEBI:29105"/>
        <note>catalytic</note>
    </ligand>
</feature>
<feature type="binding site" evidence="1">
    <location>
        <position position="339"/>
    </location>
    <ligand>
        <name>Zn(2+)</name>
        <dbReference type="ChEBI" id="CHEBI:29105"/>
        <note>catalytic</note>
    </ligand>
</feature>
<feature type="binding site" evidence="1">
    <location>
        <position position="345"/>
    </location>
    <ligand>
        <name>Zn(2+)</name>
        <dbReference type="ChEBI" id="CHEBI:29105"/>
        <note>catalytic</note>
    </ligand>
</feature>
<feature type="binding site" evidence="1">
    <location>
        <position position="405"/>
    </location>
    <ligand>
        <name>Ca(2+)</name>
        <dbReference type="ChEBI" id="CHEBI:29108"/>
    </ligand>
</feature>
<feature type="binding site" evidence="1">
    <location>
        <position position="408"/>
    </location>
    <ligand>
        <name>Ca(2+)</name>
        <dbReference type="ChEBI" id="CHEBI:29108"/>
    </ligand>
</feature>
<feature type="binding site" evidence="1">
    <location>
        <position position="410"/>
    </location>
    <ligand>
        <name>Ca(2+)</name>
        <dbReference type="ChEBI" id="CHEBI:29108"/>
    </ligand>
</feature>
<feature type="binding site" evidence="1">
    <location>
        <position position="412"/>
    </location>
    <ligand>
        <name>Ca(2+)</name>
        <dbReference type="ChEBI" id="CHEBI:29108"/>
    </ligand>
</feature>
<feature type="binding site" evidence="1">
    <location>
        <position position="415"/>
    </location>
    <ligand>
        <name>Ca(2+)</name>
        <dbReference type="ChEBI" id="CHEBI:29108"/>
    </ligand>
</feature>
<feature type="binding site" evidence="1">
    <location>
        <position position="418"/>
    </location>
    <ligand>
        <name>Ca(2+)</name>
        <dbReference type="ChEBI" id="CHEBI:29108"/>
    </ligand>
</feature>
<feature type="glycosylation site" description="N-linked (GlcNAc...) asparagine" evidence="2">
    <location>
        <position position="218"/>
    </location>
</feature>
<feature type="disulfide bond" evidence="1">
    <location>
        <begin position="310"/>
        <end position="390"/>
    </location>
</feature>
<feature type="disulfide bond" evidence="1">
    <location>
        <begin position="350"/>
        <end position="374"/>
    </location>
</feature>
<feature type="disulfide bond" evidence="1">
    <location>
        <begin position="352"/>
        <end position="357"/>
    </location>
</feature>
<feature type="disulfide bond" evidence="1">
    <location>
        <begin position="406"/>
        <end position="435"/>
    </location>
</feature>
<feature type="disulfide bond" evidence="1">
    <location>
        <begin position="417"/>
        <end position="430"/>
    </location>
</feature>
<feature type="disulfide bond" evidence="1">
    <location>
        <begin position="419"/>
        <end position="425"/>
    </location>
</feature>
<feature type="disulfide bond" evidence="1">
    <location>
        <begin position="429"/>
        <end position="452"/>
    </location>
</feature>
<feature type="disulfide bond" evidence="1">
    <location>
        <begin position="443"/>
        <end position="449"/>
    </location>
</feature>
<feature type="disulfide bond" evidence="1">
    <location>
        <begin position="448"/>
        <end position="474"/>
    </location>
</feature>
<feature type="disulfide bond" evidence="1">
    <location>
        <begin position="461"/>
        <end position="481"/>
    </location>
</feature>
<feature type="disulfide bond" evidence="1">
    <location>
        <begin position="468"/>
        <end position="499"/>
    </location>
</feature>
<feature type="disulfide bond" evidence="1">
    <location>
        <begin position="492"/>
        <end position="504"/>
    </location>
</feature>
<feature type="disulfide bond" evidence="1">
    <location>
        <begin position="511"/>
        <end position="561"/>
    </location>
</feature>
<feature type="disulfide bond" evidence="1">
    <location>
        <begin position="526"/>
        <end position="572"/>
    </location>
</feature>
<feature type="disulfide bond" evidence="1">
    <location>
        <begin position="539"/>
        <end position="549"/>
    </location>
</feature>
<feature type="disulfide bond" evidence="1">
    <location>
        <begin position="556"/>
        <end position="598"/>
    </location>
</feature>
<feature type="disulfide bond" evidence="1">
    <location>
        <begin position="592"/>
        <end position="603"/>
    </location>
</feature>
<organism>
    <name type="scientific">Gloydius halys</name>
    <name type="common">Chinese water mocassin</name>
    <name type="synonym">Agkistrodon halys</name>
    <dbReference type="NCBI Taxonomy" id="8714"/>
    <lineage>
        <taxon>Eukaryota</taxon>
        <taxon>Metazoa</taxon>
        <taxon>Chordata</taxon>
        <taxon>Craniata</taxon>
        <taxon>Vertebrata</taxon>
        <taxon>Euteleostomi</taxon>
        <taxon>Lepidosauria</taxon>
        <taxon>Squamata</taxon>
        <taxon>Bifurcata</taxon>
        <taxon>Unidentata</taxon>
        <taxon>Episquamata</taxon>
        <taxon>Toxicofera</taxon>
        <taxon>Serpentes</taxon>
        <taxon>Colubroidea</taxon>
        <taxon>Viperidae</taxon>
        <taxon>Crotalinae</taxon>
        <taxon>Gloydius</taxon>
    </lineage>
</organism>
<accession>Q8AWI5</accession>
<reference key="1">
    <citation type="journal article" date="2003" name="J. Biochem.">
        <title>A novel metalloprotease from Gloydius halys venom induces endothelial cell apoptosis through its protease and disintegrin-like domains.</title>
        <authorList>
            <person name="You W.-K."/>
            <person name="Seo H.-J."/>
            <person name="Chung K.-H."/>
            <person name="Kim D.-S."/>
        </authorList>
    </citation>
    <scope>NUCLEOTIDE SEQUENCE [MRNA]</scope>
    <scope>PROTEIN SEQUENCE OF 183-189; 194-208; 276-285 AND 488-502</scope>
    <scope>FUNCTION</scope>
    <scope>SUBUNIT</scope>
    <source>
        <tissue>Venom</tissue>
        <tissue>Venom gland</tissue>
    </source>
</reference>
<reference key="2">
    <citation type="journal article" date="2003" name="Biochem. Biophys. Res. Commun.">
        <title>A novel disintegrin-like domain of a high molecular weight metalloprotease inhibits platelet aggregation.</title>
        <authorList>
            <person name="You W.-K."/>
            <person name="Jang Y.-J."/>
            <person name="Chung K.-H."/>
            <person name="Kim D.-S."/>
        </authorList>
    </citation>
    <scope>FUNCTION</scope>
</reference>
<reference key="3">
    <citation type="journal article" date="2006" name="Biochem. Biophys. Res. Commun.">
        <title>Functional roles of the two distinct domains of halysase, a snake venom metalloprotease, to inhibit human platelet aggregation.</title>
        <authorList>
            <person name="You W.-K."/>
            <person name="Jang Y.-J."/>
            <person name="Chung K.-H."/>
            <person name="Jeon O.-H."/>
            <person name="Kim D.-S."/>
        </authorList>
    </citation>
    <scope>FUNCTION</scope>
    <scope>CATALYTIC ACTIVITY</scope>
    <scope>ACTIVITY REGULATION</scope>
    <source>
        <tissue>Venom</tissue>
    </source>
</reference>
<name>VM3HA_GLOHA</name>
<evidence type="ECO:0000250" key="1"/>
<evidence type="ECO:0000255" key="2"/>
<evidence type="ECO:0000255" key="3">
    <source>
        <dbReference type="PROSITE-ProRule" id="PRU00068"/>
    </source>
</evidence>
<evidence type="ECO:0000255" key="4">
    <source>
        <dbReference type="PROSITE-ProRule" id="PRU00276"/>
    </source>
</evidence>
<evidence type="ECO:0000255" key="5">
    <source>
        <dbReference type="PROSITE-ProRule" id="PRU10095"/>
    </source>
</evidence>
<evidence type="ECO:0000269" key="6">
    <source>
    </source>
</evidence>
<evidence type="ECO:0000269" key="7">
    <source>
    </source>
</evidence>
<evidence type="ECO:0000269" key="8">
    <source>
    </source>
</evidence>
<evidence type="ECO:0000305" key="9"/>
<keyword id="KW-0053">Apoptosis</keyword>
<keyword id="KW-0106">Calcium</keyword>
<keyword id="KW-0903">Direct protein sequencing</keyword>
<keyword id="KW-1015">Disulfide bond</keyword>
<keyword id="KW-0325">Glycoprotein</keyword>
<keyword id="KW-1200">Hemorrhagic toxin</keyword>
<keyword id="KW-1199">Hemostasis impairing toxin</keyword>
<keyword id="KW-0378">Hydrolase</keyword>
<keyword id="KW-0479">Metal-binding</keyword>
<keyword id="KW-0482">Metalloprotease</keyword>
<keyword id="KW-1201">Platelet aggregation inhibiting toxin</keyword>
<keyword id="KW-0645">Protease</keyword>
<keyword id="KW-0964">Secreted</keyword>
<keyword id="KW-0732">Signal</keyword>
<keyword id="KW-0800">Toxin</keyword>
<keyword id="KW-0862">Zinc</keyword>
<keyword id="KW-0865">Zymogen</keyword>
<comment type="function">
    <text evidence="6 7 8">Strongly inhibits the collagen-induced human platelet aggregation (inhibition of alpha-2/beta-1 (ITGA2/ITGB1) integrin). Hydrolyzes the Aalpha-chain of fibrinogen, without cleavage of Bbeta- and gamma-chains. Degrades type IV collagen (but not types I, II and V), fibronectin and vitronectin and also integrins alpha-1/beta-1 (ITGA1/ITGB1) and alpha-5/beta/1 (ITGA5/ITGB1) (but not alpha-V/beta-3 (ITGAV/ITGB3) and alpha-V/beta-5 (ITGAV/ITGB5) integrins). Both metalloproteinase (peptidase M12B) and disintegrin-like domains (recombinantly expressed and named halydin) play characteristic roles to inhibit human platelet aggregation. Induces apoptosis and strongly inhibits proliferation of endothelial cells as well as adhesion of the cells to extracellular matrix proteins. The apoptosis is closely associated with activation of caspase-3 and decreased level of Bcl-X(L)/Bax. Apohalysase, which lacks metalloprotease activity, is also able to induce the apoptosis. Cleaves insulin B chain at '34-His-|-Leu-35', '37-Glu-|-Ala-38', '38-Ala-|-Leu-39', '39-Leu-|-Tyr-40', '40-Tyr-|-Leu-41', '47-Gly-|-Phe-48' and '48-Phe-|-Phe-49' bonds (PubMed:16329990).</text>
</comment>
<comment type="cofactor">
    <cofactor evidence="1">
        <name>Zn(2+)</name>
        <dbReference type="ChEBI" id="CHEBI:29105"/>
    </cofactor>
    <text evidence="1">Binds 1 zinc ion per subunit.</text>
</comment>
<comment type="activity regulation">
    <text evidence="8">Inhibited by EDTA and EGTA. Not inhibited by PMSF, antipain, pepstatin, and iodoacetamide.</text>
</comment>
<comment type="subunit">
    <text evidence="7">Monomer.</text>
</comment>
<comment type="subcellular location">
    <subcellularLocation>
        <location>Secreted</location>
    </subcellularLocation>
</comment>
<comment type="tissue specificity">
    <text>Expressed by the venom gland.</text>
</comment>
<comment type="similarity">
    <text evidence="9">Belongs to the venom metalloproteinase (M12B) family. P-III subfamily. P-IIIa sub-subfamily.</text>
</comment>
<sequence length="610" mass="67652">MIQVLLVTICLAVFPYQGSSIILESGNVNDYEVVYPRKVPALPKGAVQPKYEDAMQYEFKVNGEPVVLHLEKNKGLFSEDYSETHYSPDGREITTNPPVEDHCYYHGRIQNDADSTASISACNGLKGHFTLQGETYLIEPLKLPDSEAHAVFKYENVEKEDEAPKMCGVTQNWESYEPIKKASQSNLTPEQQRYLNAKKYVKLVMVADYIMYLKYDRNLTTVRTRMYDIVNVINVIYQRMNIHVALVGLEIWSNKDKFILRSAADVTLKLFATWRETDLLKRKSHDNAQLLTGINFNGPTAGLGYLGGICNPMYSAGIVQDHNKIHHLVAIAMAHEMGHNLGIDHDKDTCTCGAKSCVMAGTLSCEASYLFSDCSRKEHQAFLIKDMPQCILKKPLKTDVVSPPVCGNYFVEVGEDCDCGSPATCRDSCCDAATCKLRQGAQCAEGLCCDQCRFKGAGTECRAATDECDMADLCTGRSAECTDRFQRNGQPCQNNNGYCYNGKCPIMTDQCIALFGPNAAVSEDACFQFNLEGNHYGYCRKEQNTKIACEPQNVKCGRLYCIDSSPANKNPCNIYYSPGDEDKGMVLPGTKCADGKACSNGQCVDVNRAS</sequence>